<protein>
    <recommendedName>
        <fullName>Non-structural polyprotein pORF1</fullName>
    </recommendedName>
    <domain>
        <recommendedName>
            <fullName>Methyltransferase</fullName>
            <ecNumber evidence="4">2.1.1.-</ecNumber>
            <ecNumber evidence="5">2.7.7.-</ecNumber>
        </recommendedName>
    </domain>
    <domain>
        <recommendedName>
            <fullName>Putative protease</fullName>
            <ecNumber evidence="5">3.4.-.-</ecNumber>
        </recommendedName>
        <alternativeName>
            <fullName evidence="3">Putative papain-like cysteine protease</fullName>
            <shortName evidence="3">PCP</shortName>
        </alternativeName>
    </domain>
    <domain>
        <recommendedName>
            <fullName>NTPase/helicase</fullName>
            <ecNumber evidence="5">3.6.4.-</ecNumber>
        </recommendedName>
    </domain>
    <domain>
        <recommendedName>
            <fullName>RNA-directed RNA polymerase</fullName>
            <shortName>RdRp</shortName>
            <ecNumber>2.7.7.48</ecNumber>
        </recommendedName>
    </domain>
</protein>
<comment type="function">
    <text evidence="5">Methyltransferase: Displays a capping enzyme activity. This function is necessary since all viral RNAs are synthesized in the cytoplasm, and host capping enzymes are restricted to the nucleus. The enzymatic reaction involves a covalent link between 7-methyl-GMP and the methyltransferase, whereas eukaryotic capping enzymes form a covalent complex only with GMP. Methyltransferase catalyzes transfer of a methyl group from S-adenosylmethionine to GTP and GDP to yield m(7)GTP or m(7)GDP. GDP is a better substrate than GTP. This enzyme also displays guanylyltransferase activity to form a covalent complex, methyltransferase-m(7)GMP, from which 7-methyl-GMP is transferred to the mRNA to create the cap structure.</text>
</comment>
<comment type="function">
    <text evidence="5">Y-domain: Indispensable for virus replication.</text>
</comment>
<comment type="function">
    <text evidence="5">Putative protease: The putative protease domain although necessary for replication of the virus may not be a protease but rather a structural Zn(2+)-binding domain. Inhibits induction of IFN-beta by MDA5 and RIG-I pathways and down-regulates the expression of MDA5.</text>
</comment>
<comment type="function">
    <text evidence="2 5">NTPase/helicase: Multi-functional protein that exhibits NTPase and RNA unwinding activities (By similarity). Hydrolyzes all NTPs efficiently and unwinds RNA duplexes containing 5' overhangs (By similarity). Possesses a sequence independent RNA-5'-triphosphatase (RTPase) activity suggestive of its role in forming viral cap structure. Also participates in viral genome replication, RNA translocation and genome packaging/unpackaging (By similarity).</text>
</comment>
<comment type="function">
    <text evidence="5 6">RNA-directed RNA polymerase: Plays an essential role in the virus replication (By similarity). Binds to the 3'-end of the genomic RNA to initiate viral replication (By similarity).</text>
</comment>
<comment type="catalytic activity">
    <reaction evidence="9">
        <text>RNA(n) + a ribonucleoside 5'-triphosphate = RNA(n+1) + diphosphate</text>
        <dbReference type="Rhea" id="RHEA:21248"/>
        <dbReference type="Rhea" id="RHEA-COMP:14527"/>
        <dbReference type="Rhea" id="RHEA-COMP:17342"/>
        <dbReference type="ChEBI" id="CHEBI:33019"/>
        <dbReference type="ChEBI" id="CHEBI:61557"/>
        <dbReference type="ChEBI" id="CHEBI:140395"/>
        <dbReference type="EC" id="2.7.7.48"/>
    </reaction>
</comment>
<comment type="catalytic activity">
    <reaction evidence="5">
        <text>GTP + S-adenosyl-L-methionine = N(7)-methyl-GTP + S-adenosyl-L-homocysteine</text>
        <dbReference type="Rhea" id="RHEA:46948"/>
        <dbReference type="ChEBI" id="CHEBI:37565"/>
        <dbReference type="ChEBI" id="CHEBI:57856"/>
        <dbReference type="ChEBI" id="CHEBI:59789"/>
        <dbReference type="ChEBI" id="CHEBI:87133"/>
    </reaction>
    <physiologicalReaction direction="left-to-right" evidence="5">
        <dbReference type="Rhea" id="RHEA:46949"/>
    </physiologicalReaction>
</comment>
<comment type="cofactor">
    <cofactor evidence="5">
        <name>Mg(2+)</name>
        <dbReference type="ChEBI" id="CHEBI:18420"/>
    </cofactor>
    <text evidence="5">For methyltransferase activity.</text>
</comment>
<comment type="activity regulation">
    <text evidence="5">Putative protease: Inhibited by chymostatin.</text>
</comment>
<comment type="subunit">
    <text evidence="3">The protease domain interacts with host EIF2AK4 (via C-terminus); this interaction inhibits dimerization of EIF2AK4 and prevents EIF2AK4-mediated phosphorylation of host EIF2A.</text>
</comment>
<comment type="subcellular location">
    <subcellularLocation>
        <location evidence="5">Host cytoplasm</location>
    </subcellularLocation>
    <subcellularLocation>
        <location evidence="5">Host cytoplasm</location>
        <location evidence="5">Host perinuclear region</location>
    </subcellularLocation>
</comment>
<comment type="domain">
    <text evidence="3 5">Contains a methyltransferase domain, a Y-domain, a putative protease region, a zinc-binding region with similarity to calycins, a proline-rich disordered hypervariable region (HVR), a macro domain (also called X-domain), a helicase domain and an RNA-dependent RNA polymerase domain (By similarity). Since the boundaries and the activity of the putative protease are not clearly defined, the zinc-binding region might be part of the putative protease (By similarity).</text>
</comment>
<comment type="PTM">
    <text evidence="5">ORF1 polyprotein does not seem to be processed into distinct enzymatic domains by a viral protease belonging to ORF1, but could be processed by a host serine protease like thrombin.</text>
</comment>
<comment type="similarity">
    <text evidence="11">Belongs to the hepevirus non-structural polyprotein family.</text>
</comment>
<organismHost>
    <name type="scientific">Bandicota bengalensis</name>
    <name type="common">lesser bandicoot rat</name>
    <dbReference type="NCBI Taxonomy" id="69079"/>
</organismHost>
<organismHost>
    <name type="scientific">Callithrix</name>
    <dbReference type="NCBI Taxonomy" id="9481"/>
</organismHost>
<organismHost>
    <name type="scientific">Cercopithecus hamlyni</name>
    <name type="common">Owl-faced monkey</name>
    <name type="synonym">Hamlyn's monkey</name>
    <dbReference type="NCBI Taxonomy" id="9536"/>
</organismHost>
<organismHost>
    <name type="scientific">Chlorocebus aethiops</name>
    <name type="common">Green monkey</name>
    <name type="synonym">Cercopithecus aethiops</name>
    <dbReference type="NCBI Taxonomy" id="9534"/>
</organismHost>
<organismHost>
    <name type="scientific">Homo sapiens</name>
    <name type="common">Human</name>
    <dbReference type="NCBI Taxonomy" id="9606"/>
</organismHost>
<organismHost>
    <name type="scientific">Macaca</name>
    <name type="common">macaques</name>
    <dbReference type="NCBI Taxonomy" id="9539"/>
</organismHost>
<organismHost>
    <name type="scientific">Mus musculus</name>
    <name type="common">Mouse</name>
    <dbReference type="NCBI Taxonomy" id="10090"/>
</organismHost>
<organismHost>
    <name type="scientific">Pan troglodytes</name>
    <name type="common">Chimpanzee</name>
    <dbReference type="NCBI Taxonomy" id="9598"/>
</organismHost>
<organismHost>
    <name type="scientific">Saimiri</name>
    <name type="common">squirrel monkeys</name>
    <dbReference type="NCBI Taxonomy" id="9520"/>
</organismHost>
<organismHost>
    <name type="scientific">Sus scrofa</name>
    <name type="common">Pig</name>
    <dbReference type="NCBI Taxonomy" id="9823"/>
</organismHost>
<evidence type="ECO:0000250" key="1"/>
<evidence type="ECO:0000250" key="2">
    <source>
        <dbReference type="UniProtKB" id="P29324"/>
    </source>
</evidence>
<evidence type="ECO:0000250" key="3">
    <source>
        <dbReference type="UniProtKB" id="P33424"/>
    </source>
</evidence>
<evidence type="ECO:0000250" key="4">
    <source>
        <dbReference type="UniProtKB" id="Q04610"/>
    </source>
</evidence>
<evidence type="ECO:0000250" key="5">
    <source>
        <dbReference type="UniProtKB" id="Q81862"/>
    </source>
</evidence>
<evidence type="ECO:0000250" key="6">
    <source>
        <dbReference type="UniProtKB" id="Q9WC28"/>
    </source>
</evidence>
<evidence type="ECO:0000255" key="7"/>
<evidence type="ECO:0000255" key="8">
    <source>
        <dbReference type="PROSITE-ProRule" id="PRU00490"/>
    </source>
</evidence>
<evidence type="ECO:0000255" key="9">
    <source>
        <dbReference type="PROSITE-ProRule" id="PRU00539"/>
    </source>
</evidence>
<evidence type="ECO:0000255" key="10">
    <source>
        <dbReference type="PROSITE-ProRule" id="PRU01079"/>
    </source>
</evidence>
<evidence type="ECO:0000305" key="11"/>
<accession>Q6J8G2</accession>
<accession>Q9YK10</accession>
<keyword id="KW-0067">ATP-binding</keyword>
<keyword id="KW-1015">Disulfide bond</keyword>
<keyword id="KW-0347">Helicase</keyword>
<keyword id="KW-1035">Host cytoplasm</keyword>
<keyword id="KW-0378">Hydrolase</keyword>
<keyword id="KW-0460">Magnesium</keyword>
<keyword id="KW-0479">Metal-binding</keyword>
<keyword id="KW-0489">Methyltransferase</keyword>
<keyword id="KW-0547">Nucleotide-binding</keyword>
<keyword id="KW-0548">Nucleotidyltransferase</keyword>
<keyword id="KW-0645">Protease</keyword>
<keyword id="KW-0694">RNA-binding</keyword>
<keyword id="KW-0696">RNA-directed RNA polymerase</keyword>
<keyword id="KW-0788">Thiol protease</keyword>
<keyword id="KW-0808">Transferase</keyword>
<keyword id="KW-0693">Viral RNA replication</keyword>
<keyword id="KW-0862">Zinc</keyword>
<proteinExistence type="inferred from homology"/>
<feature type="chain" id="PRO_5000055029" description="Non-structural polyprotein pORF1">
    <location>
        <begin position="1"/>
        <end position="1708"/>
    </location>
</feature>
<feature type="domain" description="Alphavirus-like MT" evidence="10">
    <location>
        <begin position="56"/>
        <end position="240"/>
    </location>
</feature>
<feature type="domain" description="Macro" evidence="8">
    <location>
        <begin position="790"/>
        <end position="936"/>
    </location>
</feature>
<feature type="domain" description="(+)RNA virus helicase ATP-binding">
    <location>
        <begin position="949"/>
        <end position="1097"/>
    </location>
</feature>
<feature type="domain" description="(+)RNA virus helicase C-terminal">
    <location>
        <begin position="1098"/>
        <end position="1231"/>
    </location>
</feature>
<feature type="domain" description="RdRp catalytic" evidence="9">
    <location>
        <begin position="1469"/>
        <end position="1580"/>
    </location>
</feature>
<feature type="region of interest" description="Methyltransferase" evidence="1">
    <location>
        <begin position="60"/>
        <end position="240"/>
    </location>
</feature>
<feature type="region of interest" description="Y-domain" evidence="5">
    <location>
        <begin position="241"/>
        <end position="439"/>
    </location>
</feature>
<feature type="region of interest" description="Putative protease" evidence="3">
    <location>
        <begin position="442"/>
        <end position="509"/>
    </location>
</feature>
<feature type="region of interest" description="Zinc-binding" evidence="3">
    <location>
        <begin position="510"/>
        <end position="691"/>
    </location>
</feature>
<feature type="region of interest" description="Hinge" evidence="1">
    <location>
        <begin position="714"/>
        <end position="793"/>
    </location>
</feature>
<feature type="region of interest" description="X-domain" evidence="1">
    <location>
        <begin position="800"/>
        <end position="957"/>
    </location>
</feature>
<feature type="region of interest" description="NTPase/helicase" evidence="1">
    <location>
        <begin position="975"/>
        <end position="1219"/>
    </location>
</feature>
<feature type="region of interest" description="RNA-directed RNA polymerase" evidence="1">
    <location>
        <begin position="1222"/>
        <end position="1708"/>
    </location>
</feature>
<feature type="binding site" evidence="3">
    <location>
        <position position="671"/>
    </location>
    <ligand>
        <name>Zn(2+)</name>
        <dbReference type="ChEBI" id="CHEBI:29105"/>
    </ligand>
</feature>
<feature type="binding site" evidence="3">
    <location>
        <position position="673"/>
    </location>
    <ligand>
        <name>Zn(2+)</name>
        <dbReference type="ChEBI" id="CHEBI:29105"/>
    </ligand>
</feature>
<feature type="binding site" evidence="3">
    <location>
        <position position="686"/>
    </location>
    <ligand>
        <name>Zn(2+)</name>
        <dbReference type="ChEBI" id="CHEBI:29105"/>
    </ligand>
</feature>
<feature type="binding site" evidence="7">
    <location>
        <begin position="990"/>
        <end position="997"/>
    </location>
    <ligand>
        <name>ATP</name>
        <dbReference type="ChEBI" id="CHEBI:30616"/>
    </ligand>
</feature>
<feature type="disulfide bond" evidence="5">
    <location>
        <begin position="434"/>
        <end position="481"/>
    </location>
</feature>
<feature type="sequence conflict" description="In Ref. 1; AAC97208." evidence="11" ref="1">
    <original>Q</original>
    <variation>H</variation>
    <location>
        <position position="4"/>
    </location>
</feature>
<feature type="sequence conflict" description="In Ref. 1; AAC97208." evidence="11" ref="1">
    <original>V</original>
    <variation>A</variation>
    <location>
        <position position="70"/>
    </location>
</feature>
<feature type="sequence conflict" description="In Ref. 1; AAC97208." evidence="11" ref="1">
    <original>R</original>
    <variation>C</variation>
    <location>
        <position position="85"/>
    </location>
</feature>
<feature type="sequence conflict" description="In Ref. 1; AAC97208." evidence="11" ref="1">
    <original>S</original>
    <variation>F</variation>
    <location>
        <position position="95"/>
    </location>
</feature>
<feature type="sequence conflict" description="In Ref. 1; AAC97208." evidence="11" ref="1">
    <original>P</original>
    <variation>L</variation>
    <location>
        <position position="193"/>
    </location>
</feature>
<feature type="sequence conflict" description="In Ref. 1; AAC97208." evidence="11" ref="1">
    <original>S</original>
    <variation>P</variation>
    <location>
        <position position="690"/>
    </location>
</feature>
<feature type="sequence conflict" description="In Ref. 1; AAC97208." evidence="11" ref="1">
    <original>E</original>
    <variation>K</variation>
    <location>
        <position position="748"/>
    </location>
</feature>
<dbReference type="EC" id="2.1.1.-" evidence="4"/>
<dbReference type="EC" id="2.7.7.-" evidence="5"/>
<dbReference type="EC" id="3.4.-.-" evidence="5"/>
<dbReference type="EC" id="3.6.4.-" evidence="5"/>
<dbReference type="EC" id="2.7.7.48"/>
<dbReference type="EMBL" id="AF082843">
    <property type="protein sequence ID" value="AAC97208.1"/>
    <property type="molecule type" value="Genomic_RNA"/>
</dbReference>
<dbReference type="EMBL" id="AY575857">
    <property type="protein sequence ID" value="AAT40994.1"/>
    <property type="molecule type" value="Genomic_RNA"/>
</dbReference>
<dbReference type="EMBL" id="AY575858">
    <property type="protein sequence ID" value="AAT40997.1"/>
    <property type="molecule type" value="Genomic_RNA"/>
</dbReference>
<dbReference type="EMBL" id="AY575859">
    <property type="protein sequence ID" value="AAT41000.1"/>
    <property type="molecule type" value="Genomic_RNA"/>
</dbReference>
<dbReference type="SMR" id="Q6J8G2"/>
<dbReference type="Proteomes" id="UP000001028">
    <property type="component" value="Segment"/>
</dbReference>
<dbReference type="Proteomes" id="UP000008858">
    <property type="component" value="Genome"/>
</dbReference>
<dbReference type="Proteomes" id="UP000008859">
    <property type="component" value="Genome"/>
</dbReference>
<dbReference type="Proteomes" id="UP000008989">
    <property type="component" value="Genome"/>
</dbReference>
<dbReference type="GO" id="GO:0044220">
    <property type="term" value="C:host cell perinuclear region of cytoplasm"/>
    <property type="evidence" value="ECO:0007669"/>
    <property type="project" value="UniProtKB-SubCell"/>
</dbReference>
<dbReference type="GO" id="GO:0005524">
    <property type="term" value="F:ATP binding"/>
    <property type="evidence" value="ECO:0007669"/>
    <property type="project" value="UniProtKB-KW"/>
</dbReference>
<dbReference type="GO" id="GO:0008234">
    <property type="term" value="F:cysteine-type peptidase activity"/>
    <property type="evidence" value="ECO:0007669"/>
    <property type="project" value="UniProtKB-KW"/>
</dbReference>
<dbReference type="GO" id="GO:0004386">
    <property type="term" value="F:helicase activity"/>
    <property type="evidence" value="ECO:0007669"/>
    <property type="project" value="UniProtKB-KW"/>
</dbReference>
<dbReference type="GO" id="GO:0046872">
    <property type="term" value="F:metal ion binding"/>
    <property type="evidence" value="ECO:0007669"/>
    <property type="project" value="UniProtKB-KW"/>
</dbReference>
<dbReference type="GO" id="GO:0008174">
    <property type="term" value="F:mRNA methyltransferase activity"/>
    <property type="evidence" value="ECO:0007669"/>
    <property type="project" value="InterPro"/>
</dbReference>
<dbReference type="GO" id="GO:0003723">
    <property type="term" value="F:RNA binding"/>
    <property type="evidence" value="ECO:0007669"/>
    <property type="project" value="UniProtKB-KW"/>
</dbReference>
<dbReference type="GO" id="GO:0003968">
    <property type="term" value="F:RNA-directed RNA polymerase activity"/>
    <property type="evidence" value="ECO:0007669"/>
    <property type="project" value="UniProtKB-KW"/>
</dbReference>
<dbReference type="GO" id="GO:0006351">
    <property type="term" value="P:DNA-templated transcription"/>
    <property type="evidence" value="ECO:0007669"/>
    <property type="project" value="InterPro"/>
</dbReference>
<dbReference type="GO" id="GO:0032259">
    <property type="term" value="P:methylation"/>
    <property type="evidence" value="ECO:0007669"/>
    <property type="project" value="UniProtKB-KW"/>
</dbReference>
<dbReference type="GO" id="GO:0016556">
    <property type="term" value="P:mRNA modification"/>
    <property type="evidence" value="ECO:0007669"/>
    <property type="project" value="InterPro"/>
</dbReference>
<dbReference type="GO" id="GO:0006508">
    <property type="term" value="P:proteolysis"/>
    <property type="evidence" value="ECO:0007669"/>
    <property type="project" value="UniProtKB-KW"/>
</dbReference>
<dbReference type="GO" id="GO:0006396">
    <property type="term" value="P:RNA processing"/>
    <property type="evidence" value="ECO:0007669"/>
    <property type="project" value="InterPro"/>
</dbReference>
<dbReference type="GO" id="GO:0019082">
    <property type="term" value="P:viral protein processing"/>
    <property type="evidence" value="ECO:0007669"/>
    <property type="project" value="InterPro"/>
</dbReference>
<dbReference type="GO" id="GO:0039694">
    <property type="term" value="P:viral RNA genome replication"/>
    <property type="evidence" value="ECO:0007669"/>
    <property type="project" value="InterPro"/>
</dbReference>
<dbReference type="CDD" id="cd23259">
    <property type="entry name" value="Hepeviridae_RdRp"/>
    <property type="match status" value="1"/>
</dbReference>
<dbReference type="CDD" id="cd21557">
    <property type="entry name" value="Macro_X_Nsp3-like"/>
    <property type="match status" value="1"/>
</dbReference>
<dbReference type="CDD" id="cd18809">
    <property type="entry name" value="SF1_C_RecD"/>
    <property type="match status" value="1"/>
</dbReference>
<dbReference type="FunFam" id="3.40.50.300:FF:001668">
    <property type="entry name" value="Non-structural polyprotein pORF1"/>
    <property type="match status" value="1"/>
</dbReference>
<dbReference type="FunFam" id="3.40.50.300:FF:001964">
    <property type="entry name" value="Non-structural polyprotein pORF1"/>
    <property type="match status" value="1"/>
</dbReference>
<dbReference type="Gene3D" id="3.40.220.10">
    <property type="entry name" value="Leucine Aminopeptidase, subunit E, domain 1"/>
    <property type="match status" value="1"/>
</dbReference>
<dbReference type="Gene3D" id="3.40.50.300">
    <property type="entry name" value="P-loop containing nucleotide triphosphate hydrolases"/>
    <property type="match status" value="2"/>
</dbReference>
<dbReference type="InterPro" id="IPR027351">
    <property type="entry name" value="(+)RNA_virus_helicase_core_dom"/>
</dbReference>
<dbReference type="InterPro" id="IPR002588">
    <property type="entry name" value="Alphavirus-like_MT_dom"/>
</dbReference>
<dbReference type="InterPro" id="IPR043502">
    <property type="entry name" value="DNA/RNA_pol_sf"/>
</dbReference>
<dbReference type="InterPro" id="IPR008748">
    <property type="entry name" value="Hepatitis-E_Cys-pept"/>
</dbReference>
<dbReference type="InterPro" id="IPR022202">
    <property type="entry name" value="Hepatitis-E_hinge"/>
</dbReference>
<dbReference type="InterPro" id="IPR047307">
    <property type="entry name" value="Hepeviridae_RdRp"/>
</dbReference>
<dbReference type="InterPro" id="IPR002589">
    <property type="entry name" value="Macro_dom"/>
</dbReference>
<dbReference type="InterPro" id="IPR043472">
    <property type="entry name" value="Macro_dom-like"/>
</dbReference>
<dbReference type="InterPro" id="IPR044371">
    <property type="entry name" value="Macro_X_NSP3-like"/>
</dbReference>
<dbReference type="InterPro" id="IPR027417">
    <property type="entry name" value="P-loop_NTPase"/>
</dbReference>
<dbReference type="InterPro" id="IPR001788">
    <property type="entry name" value="RNA-dep_RNA_pol_alsuvir"/>
</dbReference>
<dbReference type="InterPro" id="IPR007094">
    <property type="entry name" value="RNA-dir_pol_PSvirus"/>
</dbReference>
<dbReference type="Pfam" id="PF12526">
    <property type="entry name" value="DUF3729"/>
    <property type="match status" value="1"/>
</dbReference>
<dbReference type="Pfam" id="PF01661">
    <property type="entry name" value="Macro"/>
    <property type="match status" value="1"/>
</dbReference>
<dbReference type="Pfam" id="PF05417">
    <property type="entry name" value="Peptidase_C41"/>
    <property type="match status" value="1"/>
</dbReference>
<dbReference type="Pfam" id="PF00978">
    <property type="entry name" value="RdRP_2"/>
    <property type="match status" value="1"/>
</dbReference>
<dbReference type="Pfam" id="PF01443">
    <property type="entry name" value="Viral_helicase1"/>
    <property type="match status" value="1"/>
</dbReference>
<dbReference type="Pfam" id="PF01660">
    <property type="entry name" value="Vmethyltransf"/>
    <property type="match status" value="1"/>
</dbReference>
<dbReference type="SMART" id="SM00506">
    <property type="entry name" value="A1pp"/>
    <property type="match status" value="1"/>
</dbReference>
<dbReference type="SUPFAM" id="SSF56672">
    <property type="entry name" value="DNA/RNA polymerases"/>
    <property type="match status" value="1"/>
</dbReference>
<dbReference type="SUPFAM" id="SSF52949">
    <property type="entry name" value="Macro domain-like"/>
    <property type="match status" value="1"/>
</dbReference>
<dbReference type="SUPFAM" id="SSF52540">
    <property type="entry name" value="P-loop containing nucleoside triphosphate hydrolases"/>
    <property type="match status" value="2"/>
</dbReference>
<dbReference type="PROSITE" id="PS51743">
    <property type="entry name" value="ALPHAVIRUS_MT"/>
    <property type="match status" value="1"/>
</dbReference>
<dbReference type="PROSITE" id="PS51154">
    <property type="entry name" value="MACRO"/>
    <property type="match status" value="1"/>
</dbReference>
<dbReference type="PROSITE" id="PS51657">
    <property type="entry name" value="PSRV_HELICASE"/>
    <property type="match status" value="1"/>
</dbReference>
<dbReference type="PROSITE" id="PS50507">
    <property type="entry name" value="RDRP_SSRNA_POS"/>
    <property type="match status" value="1"/>
</dbReference>
<gene>
    <name type="ORF">ORF1</name>
</gene>
<organism>
    <name type="scientific">Hepatitis E virus genotype 3 (isolate Swine/United States/swUS1)</name>
    <name type="common">HEV-3</name>
    <name type="synonym">Hepatitis E virus genotype 3 (isolate Swine/United States/Meng)</name>
    <dbReference type="NCBI Taxonomy" id="512345"/>
    <lineage>
        <taxon>Viruses</taxon>
        <taxon>Riboviria</taxon>
        <taxon>Orthornavirae</taxon>
        <taxon>Kitrinoviricota</taxon>
        <taxon>Alsuviricetes</taxon>
        <taxon>Hepelivirales</taxon>
        <taxon>Hepeviridae</taxon>
        <taxon>Orthohepevirinae</taxon>
        <taxon>Paslahepevirus</taxon>
        <taxon>Hepatitis E virus</taxon>
    </lineage>
</organism>
<sequence length="1708" mass="187395">MEAQQFIKAPGITTAIEQAALAAANSALANAVVVRPFLSRVQTEILINLMQPRQLVFRPEVLWNHPIQRVIHNELEQYCRARAGRCLEVGAHPRSINDNPNVLHRCFLRPVGRDVQRWYSAPTRGPAANCRRSALRGLPPVDRTYCFDGFSRCAFAAETGVALYSLHDLWPADVAEAMARHGMTRLYAALHLPPEVLLPPGTYHTTSYLLIHDGDRAVVTYEGDTSAGYNHDVSILRAWIRTTKIVGDHPLVIERVRAIGCHFVLLLTAAPEPSPMPYVPYPRSTEVYVRSIFGPGGSPSLFPSACSTKSTFHAVPVHIWDRLMLFGATLDDQAFCCSRLMTYLRGISYKVTVGALVANEGWNASEDALTAVITAAYLTICHQRYLRTQAISKGMRRLEVEHAQKFITRLYSWLFEKSGRDYIPGRQLQFYAQCRRWLSAGFHLDPRVLVFDESVPCRCRTFLKKVAGKFCCFMRWLGQECTCFLEPAEGLVGDYGHDNEAYEGSEVDPAEPAHLDVSGTYAVHGRQLEALYRALNVPHDIAARASRLTATVELTASPDRLECRTVLGNKTFRTTVVDGAHLEANGPEQYVLSFDASRQSMGAGSHSLTYELTPAGLQVRISSNGLDCTATFPPGGAPSAAPGEVAAFCSALYRYNRFTQRHSLTGGLWLHPEGLLGIFPPFSPGHIWESANPFCGEGTLYTRTWSTSGFSSDFSPPEAAAPVLAAAPGLPHPTPPVSDIWVLPPPSEESQVDAASVPPAPEPAGLPSSIVLTLPPPLPPVRKPPTPPPSRTRRLLYTYPDGAKVYAGSLFESDCNWLVNASNPGHRPGGGLCHAFYQRFPEAFYPTEFIMREGLAAYTLTPRPIIHAVAPDYRVEQNPKRLEAAYRETCSRRGTAAYPLLGSGIYQVPVSLSFDAWERNHRPGDELYLTEPAAAWFEANKPAQPALTITEDTARTANLALEIDAATDVGRACAGCTISPGIVHYQFTAGVPGSGKSRSIQQGDVDVVVVPTRELRNSWRRRGFAAFTPHTAARVTIGRRVVIDEAPSLPPHLLLLHMQRASSVHLLGDPNQIPAIDFEHAGLVPAIRPELAPTSWWHVTHRCPADVCELIRGAYPKIQTTSRVLRSLFWNEPAIGQKLVFTQAAKAANPGAITVHEAQGATFTETTIIATADARGLIQSSRAHAIVALTRHTEKCVILDAPGLLREVGISDVIVNNFFLAGGEVGHHRPSVIPRGNPDQNLGTLQAFPPSCQISAYHQLAEELGHRPAPVAAVLPPCPELEQGLLYMPQELTVSDSVLVFELTDIVHCRMAAPSQRKAVLSTLVGRYGRRTKLYEAAHSDVRESLARFIPTIGPVQATTCELYELVEAMVEKGQDGSAVLELDLCNRDVSRITFFQKDCNKFTTGETIAHGKVGQGISAWSKTFCALFGPWFRAIEKEILALLPPNIFYGDAYEESVFAAAVSGAGSCMVFENDFSEFDSTQNNFSLGLECVVMEECGMPQWLIRLYHLVRSAWILQAPKESLKGFWKKHSGEPGTLLWNTVWNMAIIAHCYEFRDFRVAAFKGDDSVVLCSDYRQSRNAAALIAGCGLKLKVDYRPIGLYAGVVVAPGLGTLPDVVRFAGRLSEKNWGPGPERAEQLRLAVCDFLRGLTNVAQVCVDVVSRVYGVSPGLVHNLIGMLQTIADGKAHFTETIKPVLDLTNSIIQRVE</sequence>
<reference key="1">
    <citation type="journal article" date="1998" name="J. Virol.">
        <title>Genetic and experimental evidence for cross-species infection by swine hepatitis E virus.</title>
        <authorList>
            <person name="Meng X.J."/>
            <person name="Halbur P.G."/>
            <person name="Shapiro M.S."/>
            <person name="Govindarajan S."/>
            <person name="Bruna J.D."/>
            <person name="Mushahwar I.K."/>
            <person name="Purcell R.H."/>
            <person name="Emerson S.U."/>
        </authorList>
    </citation>
    <scope>NUCLEOTIDE SEQUENCE [GENOMIC RNA]</scope>
</reference>
<reference key="2">
    <citation type="journal article" date="2005" name="J. Virol.">
        <title>Capped RNA transcripts of full-length cDNA clones of swine hepatitis E virus are replication competent when transfected into Huh7 cells and infectious when intrahepatically inoculated into pigs.</title>
        <authorList>
            <person name="Huang Y.W."/>
            <person name="Haqshenas G."/>
            <person name="Kasorndorkbua C."/>
            <person name="Halbur P.G."/>
            <person name="Emerson S.U."/>
            <person name="Meng X.J."/>
        </authorList>
    </citation>
    <scope>NUCLEOTIDE SEQUENCE [GENOMIC RNA]</scope>
    <source>
        <strain>Isolate pSHEV-1</strain>
        <strain>Isolate pSHEV-2</strain>
        <strain>Isolate pSHEV-3</strain>
    </source>
</reference>
<name>POLN_HEVMG</name>